<proteinExistence type="evidence at protein level"/>
<reference key="1">
    <citation type="journal article" date="1999" name="Eur. J. Biochem.">
        <title>Molecular cloning of cDNAs of mouse peptidylarginine deiminase type I, type III and type IV, and the expression pattern of type I in mouse.</title>
        <authorList>
            <person name="Rusd A.A."/>
            <person name="Ikejiri Y."/>
            <person name="Ono H."/>
            <person name="Yonekawa T."/>
            <person name="Shiraiwa M."/>
            <person name="Kawada A."/>
            <person name="Takahara H."/>
        </authorList>
    </citation>
    <scope>NUCLEOTIDE SEQUENCE [MRNA]</scope>
    <source>
        <tissue>Epidermis</tissue>
    </source>
</reference>
<reference key="2">
    <citation type="journal article" date="2004" name="Gene">
        <title>Comparative analysis of the mouse and human peptidylarginine deiminase gene clusters reveals highly conserved non-coding segments and a new human gene, PADI6.</title>
        <authorList>
            <person name="Chavanas S."/>
            <person name="Mechin M.-C."/>
            <person name="Takahara H."/>
            <person name="Kawada A."/>
            <person name="Nachat R."/>
            <person name="Serre G."/>
            <person name="Simon M."/>
        </authorList>
    </citation>
    <scope>NUCLEOTIDE SEQUENCE [GENOMIC DNA]</scope>
    <source>
        <strain>129/SvJ</strain>
    </source>
</reference>
<reference key="3">
    <citation type="journal article" date="2009" name="PLoS Biol.">
        <title>Lineage-specific biology revealed by a finished genome assembly of the mouse.</title>
        <authorList>
            <person name="Church D.M."/>
            <person name="Goodstadt L."/>
            <person name="Hillier L.W."/>
            <person name="Zody M.C."/>
            <person name="Goldstein S."/>
            <person name="She X."/>
            <person name="Bult C.J."/>
            <person name="Agarwala R."/>
            <person name="Cherry J.L."/>
            <person name="DiCuccio M."/>
            <person name="Hlavina W."/>
            <person name="Kapustin Y."/>
            <person name="Meric P."/>
            <person name="Maglott D."/>
            <person name="Birtle Z."/>
            <person name="Marques A.C."/>
            <person name="Graves T."/>
            <person name="Zhou S."/>
            <person name="Teague B."/>
            <person name="Potamousis K."/>
            <person name="Churas C."/>
            <person name="Place M."/>
            <person name="Herschleb J."/>
            <person name="Runnheim R."/>
            <person name="Forrest D."/>
            <person name="Amos-Landgraf J."/>
            <person name="Schwartz D.C."/>
            <person name="Cheng Z."/>
            <person name="Lindblad-Toh K."/>
            <person name="Eichler E.E."/>
            <person name="Ponting C.P."/>
        </authorList>
    </citation>
    <scope>NUCLEOTIDE SEQUENCE [LARGE SCALE GENOMIC DNA]</scope>
    <source>
        <strain>C57BL/6J</strain>
    </source>
</reference>
<reference key="4">
    <citation type="journal article" date="2004" name="Cell">
        <title>Histone deimination antagonizes arginine methylation.</title>
        <authorList>
            <person name="Cuthbert G.L."/>
            <person name="Daujat S."/>
            <person name="Snowden A.W."/>
            <person name="Erdjument-Bromage H."/>
            <person name="Hagiwara T."/>
            <person name="Yamada M."/>
            <person name="Schneider R."/>
            <person name="Gregory P.D."/>
            <person name="Tempst P."/>
            <person name="Bannister A.J."/>
            <person name="Kouzarides T."/>
        </authorList>
    </citation>
    <scope>FUNCTION</scope>
    <scope>CATALYTIC ACTIVITY</scope>
</reference>
<reference key="5">
    <citation type="journal article" date="2010" name="J. Exp. Med.">
        <title>PAD4 is essential for antibacterial innate immunity mediated by neutrophil extracellular traps.</title>
        <authorList>
            <person name="Li P."/>
            <person name="Li M."/>
            <person name="Lindberg M.R."/>
            <person name="Kennett M.J."/>
            <person name="Xiong N."/>
            <person name="Wang Y."/>
        </authorList>
    </citation>
    <scope>FUNCTION</scope>
    <scope>DISRUPTION PHENOTYPE</scope>
</reference>
<reference key="6">
    <citation type="journal article" date="2013" name="Proc. Natl. Acad. Sci. U.S.A.">
        <title>Neutrophil histone modification by peptidylarginine deiminase 4 is critical for deep vein thrombosis in mice.</title>
        <authorList>
            <person name="Martinod K."/>
            <person name="Demers M."/>
            <person name="Fuchs T.A."/>
            <person name="Wong S.L."/>
            <person name="Brill A."/>
            <person name="Gallant M."/>
            <person name="Hu J."/>
            <person name="Wang Y."/>
            <person name="Wagner D.D."/>
        </authorList>
    </citation>
    <scope>FUNCTION</scope>
    <scope>DISRUPTION PHENOTYPE</scope>
</reference>
<reference key="7">
    <citation type="journal article" date="2014" name="Nature">
        <title>Citrullination regulates pluripotency and histone H1 binding to chromatin.</title>
        <authorList>
            <person name="Christophorou M.A."/>
            <person name="Castelo-Branco G."/>
            <person name="Halley-Stott R.P."/>
            <person name="Oliveira C.S."/>
            <person name="Loos R."/>
            <person name="Radzisheuskaya A."/>
            <person name="Mowen K.A."/>
            <person name="Bertone P."/>
            <person name="Silva J.C."/>
            <person name="Zernicka-Goetz M."/>
            <person name="Nielsen M.L."/>
            <person name="Gurdon J.B."/>
            <person name="Kouzarides T."/>
        </authorList>
    </citation>
    <scope>FUNCTION</scope>
    <scope>TISSUE SPECIFICITY</scope>
    <scope>ACTIVITY REGULATION</scope>
</reference>
<reference key="8">
    <citation type="journal article" date="2020" name="Nature">
        <title>DNA of neutrophil extracellular traps promotes cancer metastasis via CCDC25.</title>
        <authorList>
            <person name="Yang L."/>
            <person name="Liu Q."/>
            <person name="Zhang X."/>
            <person name="Liu X."/>
            <person name="Zhou B."/>
            <person name="Chen J."/>
            <person name="Huang D."/>
            <person name="Li J."/>
            <person name="Li H."/>
            <person name="Chen F."/>
            <person name="Liu J."/>
            <person name="Xing Y."/>
            <person name="Chen X."/>
            <person name="Su S."/>
            <person name="Song E."/>
        </authorList>
    </citation>
    <scope>FUNCTION</scope>
    <scope>DISRUPTION PHENOTYPE</scope>
</reference>
<organism>
    <name type="scientific">Mus musculus</name>
    <name type="common">Mouse</name>
    <dbReference type="NCBI Taxonomy" id="10090"/>
    <lineage>
        <taxon>Eukaryota</taxon>
        <taxon>Metazoa</taxon>
        <taxon>Chordata</taxon>
        <taxon>Craniata</taxon>
        <taxon>Vertebrata</taxon>
        <taxon>Euteleostomi</taxon>
        <taxon>Mammalia</taxon>
        <taxon>Eutheria</taxon>
        <taxon>Euarchontoglires</taxon>
        <taxon>Glires</taxon>
        <taxon>Rodentia</taxon>
        <taxon>Myomorpha</taxon>
        <taxon>Muroidea</taxon>
        <taxon>Muridae</taxon>
        <taxon>Murinae</taxon>
        <taxon>Mus</taxon>
        <taxon>Mus</taxon>
    </lineage>
</organism>
<sequence length="666" mass="74415">MAQGAVIHVAPEQPTHAVCVVGTATPLDVRGSAPKGYTTFGITASPGVIVDVIHGPPVKKSTMGASKWPLDPELEVTLQVKAASSRTDDEKVRVSYYGPKTSPVQALIYITGVELSLSADVTRTGRVKPAQAGKDQSTWTWGPGGRGAILLVNCDKEDPQASGMDFEDDKILDNKDLQDMSPMTLSTKTPKDFFEKYQLVLEVPKAKMNRVRVFRATRGKLPSRYKVALGPQQFSYCLELPGGQHSTDFYVEGLAFPDADFKGLIPLTISLLDKSNPELPEALVFQDSVTFRVAPWIMTPNTQPPQEVYVCRVSDNEDFLKSLATLTKKAKCKLTVCPEEENIDDQWMQDEMEIGYIQAPHKTLPVVFDSPRDRGLKDFPVKRVMGPNFGYVTRKLYMSELTGLDAFGNLEVSPPVTVRGKEYPLGRILIGNSGYSSSESRDMHQALQDFLSAQQVQAPVRLFSDWLFVGHVDEFLSFVPARDKQGFRLLLSSPRACYQLFQELQSQGHGEATLFEGLKRKRQTINEILSNKKLRDQNAYVESCIDWNRAVLKRELGLAEGDIIDIPQLFKLAGNSRGNSKAQAFFPNMVNMLVLGKYLGIPKPFGPIIDGHCCLEEEVRSHLEPLGLHCTFINDFYTYHVYNGEVHCGTNVRRKPFTFKWWHMVP</sequence>
<comment type="function">
    <text evidence="1 2 3 4 5 6">Catalyzes the citrullination/deimination of arginine residues of proteins such as histones, thereby playing a key role in histone code and regulation of stem cell maintenance (PubMed:15339660, PubMed:32528174). Citrullinates histone H1 at 'Arg-54' (to form H1R54ci), histone H3 at 'Arg-2', 'Arg-8', 'Arg-17' and/or 'Arg-26' (to form H3R2ci, H3R8ci, H3R17ci, H3R26ci, respectively) and histone H4 at 'Arg-3' (to form H4R3ci) (PubMed:15339660). Acts as a key regulator of stem cell maintenance by mediating citrullination of histone H1: citrullination of 'Arg-54' of histone H1 (H1R54ci) results in H1 displacement from chromatin and global chromatin decondensation, thereby promoting pluripotency and stem cell maintenance (PubMed:24463520, PubMed:32528174). Promotes profound chromatin decondensation during the innate immune response to infection in neutrophils by mediating formation of H1R54ci (PubMed:20733033, PubMed:23650392). Required for the formation of neutrophil extracellular traps (NETs); NETs are mainly composed of DNA fibers and are released by neutrophils to bind pathogens during inflammation (PubMed:20733033, PubMed:32528174). Citrullination of histone H3 prevents their methylation by CARM1 and HRMT1L2/PRMT1 and represses transcription (By similarity). Citrullinates EP300/P300 at 'Arg-2142', which favors its interaction with NCOA2/GRIP1 (By similarity).</text>
</comment>
<comment type="catalytic activity">
    <reaction evidence="2">
        <text>L-arginyl-[protein] + H2O = L-citrullyl-[protein] + NH4(+)</text>
        <dbReference type="Rhea" id="RHEA:18089"/>
        <dbReference type="Rhea" id="RHEA-COMP:10532"/>
        <dbReference type="Rhea" id="RHEA-COMP:10588"/>
        <dbReference type="ChEBI" id="CHEBI:15377"/>
        <dbReference type="ChEBI" id="CHEBI:28938"/>
        <dbReference type="ChEBI" id="CHEBI:29965"/>
        <dbReference type="ChEBI" id="CHEBI:83397"/>
        <dbReference type="EC" id="3.5.3.15"/>
    </reaction>
</comment>
<comment type="cofactor">
    <cofactor evidence="1">
        <name>Ca(2+)</name>
        <dbReference type="ChEBI" id="CHEBI:29108"/>
    </cofactor>
    <text evidence="1">Binds 5 Ca(2+) ions per subunit.</text>
</comment>
<comment type="activity regulation">
    <text evidence="5">Strongly Inhibited by F-amidine and N-alpha-benzoyl-N5-(2-chloro-1-iminoethyl)-L-ornithine amide (Cl-amidine). These inhibitors are however not specific to PADI4 and also inhibit other members of the family.</text>
</comment>
<comment type="subcellular location">
    <subcellularLocation>
        <location evidence="1">Cytoplasm</location>
    </subcellularLocation>
    <subcellularLocation>
        <location evidence="1">Nucleus</location>
    </subcellularLocation>
    <subcellularLocation>
        <location evidence="1">Cytoplasmic granule</location>
    </subcellularLocation>
    <text evidence="1">Cytoplasmic granules of eosinophils and neutrophils.</text>
</comment>
<comment type="tissue specificity">
    <text evidence="5">Expressed in pluripotent embryonic stem and induced pluripotent stem cells but not multipotent neural stem cells.</text>
</comment>
<comment type="PTM">
    <text evidence="1">Autocitrullination at Arg-372 and Arg-374 inactivates the enzyme.</text>
</comment>
<comment type="disruption phenotype">
    <text evidence="3 4 6">Mice survive to adulthood and do not display detectable physical abnormality (PubMed:20733033). However, mice were born at a rate lower than predicted by the Mendelian ratio and display defects in innate immune response (PubMed:20733033). Impaired formation of neutrophil extracellular traps (NETs) (PubMed:20733033, PubMed:32528174). Mice are more susceptible to bacterial infection: neutrophils cannot form NETs after stimulation with chemokines or incubation with bacteria, and are deficient in bacterial killing by NETs (PubMed:20733033). Less than 10% of deficient mice produce a thrombus 48 hours after inferior vena cava stenosis whereas 90% of wild-type mice do (PubMed:23650392).</text>
</comment>
<comment type="similarity">
    <text evidence="7">Belongs to the protein arginine deiminase family.</text>
</comment>
<evidence type="ECO:0000250" key="1">
    <source>
        <dbReference type="UniProtKB" id="Q9UM07"/>
    </source>
</evidence>
<evidence type="ECO:0000269" key="2">
    <source>
    </source>
</evidence>
<evidence type="ECO:0000269" key="3">
    <source>
    </source>
</evidence>
<evidence type="ECO:0000269" key="4">
    <source>
    </source>
</evidence>
<evidence type="ECO:0000269" key="5">
    <source>
    </source>
</evidence>
<evidence type="ECO:0000269" key="6">
    <source>
    </source>
</evidence>
<evidence type="ECO:0000305" key="7"/>
<feature type="chain" id="PRO_0000220034" description="Protein-arginine deiminase type-4">
    <location>
        <begin position="1"/>
        <end position="666"/>
    </location>
</feature>
<feature type="active site" evidence="1">
    <location>
        <position position="350"/>
    </location>
</feature>
<feature type="active site" evidence="1">
    <location>
        <position position="471"/>
    </location>
</feature>
<feature type="active site" evidence="1">
    <location>
        <position position="473"/>
    </location>
</feature>
<feature type="active site" evidence="1">
    <location>
        <position position="648"/>
    </location>
</feature>
<feature type="binding site" evidence="1">
    <location>
        <position position="153"/>
    </location>
    <ligand>
        <name>Ca(2+)</name>
        <dbReference type="ChEBI" id="CHEBI:29108"/>
        <label>1</label>
    </ligand>
</feature>
<feature type="binding site" evidence="1">
    <location>
        <position position="155"/>
    </location>
    <ligand>
        <name>Ca(2+)</name>
        <dbReference type="ChEBI" id="CHEBI:29108"/>
        <label>1</label>
    </ligand>
</feature>
<feature type="binding site" evidence="1">
    <location>
        <position position="155"/>
    </location>
    <ligand>
        <name>Ca(2+)</name>
        <dbReference type="ChEBI" id="CHEBI:29108"/>
        <label>2</label>
    </ligand>
</feature>
<feature type="binding site" evidence="1">
    <location>
        <position position="165"/>
    </location>
    <ligand>
        <name>Ca(2+)</name>
        <dbReference type="ChEBI" id="CHEBI:29108"/>
        <label>1</label>
    </ligand>
</feature>
<feature type="binding site" evidence="1">
    <location>
        <position position="165"/>
    </location>
    <ligand>
        <name>Ca(2+)</name>
        <dbReference type="ChEBI" id="CHEBI:29108"/>
        <label>3</label>
    </ligand>
</feature>
<feature type="binding site" evidence="1">
    <location>
        <position position="168"/>
    </location>
    <ligand>
        <name>Ca(2+)</name>
        <dbReference type="ChEBI" id="CHEBI:29108"/>
        <label>3</label>
    </ligand>
</feature>
<feature type="binding site" evidence="1">
    <location>
        <position position="176"/>
    </location>
    <ligand>
        <name>Ca(2+)</name>
        <dbReference type="ChEBI" id="CHEBI:29108"/>
        <label>1</label>
    </ligand>
</feature>
<feature type="binding site" evidence="1">
    <location>
        <position position="179"/>
    </location>
    <ligand>
        <name>Ca(2+)</name>
        <dbReference type="ChEBI" id="CHEBI:29108"/>
        <label>1</label>
    </ligand>
</feature>
<feature type="binding site" evidence="1">
    <location>
        <position position="179"/>
    </location>
    <ligand>
        <name>Ca(2+)</name>
        <dbReference type="ChEBI" id="CHEBI:29108"/>
        <label>2</label>
    </ligand>
</feature>
<feature type="binding site" evidence="1">
    <location>
        <position position="349"/>
    </location>
    <ligand>
        <name>Ca(2+)</name>
        <dbReference type="ChEBI" id="CHEBI:29108"/>
        <label>4</label>
    </ligand>
</feature>
<feature type="binding site" evidence="1">
    <location>
        <position position="351"/>
    </location>
    <ligand>
        <name>Ca(2+)</name>
        <dbReference type="ChEBI" id="CHEBI:29108"/>
        <label>5</label>
    </ligand>
</feature>
<feature type="binding site" evidence="1">
    <location>
        <position position="353"/>
    </location>
    <ligand>
        <name>Ca(2+)</name>
        <dbReference type="ChEBI" id="CHEBI:29108"/>
        <label>4</label>
    </ligand>
</feature>
<feature type="binding site" evidence="1">
    <location>
        <position position="369"/>
    </location>
    <ligand>
        <name>Ca(2+)</name>
        <dbReference type="ChEBI" id="CHEBI:29108"/>
        <label>5</label>
    </ligand>
</feature>
<feature type="binding site" evidence="1">
    <location>
        <position position="370"/>
    </location>
    <ligand>
        <name>Ca(2+)</name>
        <dbReference type="ChEBI" id="CHEBI:29108"/>
        <label>5</label>
    </ligand>
</feature>
<feature type="binding site" evidence="1">
    <location>
        <position position="374"/>
    </location>
    <ligand>
        <name>substrate</name>
    </ligand>
</feature>
<feature type="binding site" evidence="1">
    <location>
        <position position="407"/>
    </location>
    <ligand>
        <name>Ca(2+)</name>
        <dbReference type="ChEBI" id="CHEBI:29108"/>
        <label>4</label>
    </ligand>
</feature>
<feature type="binding site" evidence="1">
    <location>
        <position position="410"/>
    </location>
    <ligand>
        <name>Ca(2+)</name>
        <dbReference type="ChEBI" id="CHEBI:29108"/>
        <label>4</label>
    </ligand>
</feature>
<feature type="binding site" evidence="1">
    <location>
        <position position="411"/>
    </location>
    <ligand>
        <name>Ca(2+)</name>
        <dbReference type="ChEBI" id="CHEBI:29108"/>
        <label>4</label>
    </ligand>
</feature>
<feature type="modified residue" description="Citrulline" evidence="1">
    <location>
        <position position="212"/>
    </location>
</feature>
<feature type="modified residue" description="Citrulline" evidence="1">
    <location>
        <position position="218"/>
    </location>
</feature>
<feature type="modified residue" description="Citrulline" evidence="1">
    <location>
        <position position="372"/>
    </location>
</feature>
<feature type="modified residue" description="Citrulline" evidence="1">
    <location>
        <position position="374"/>
    </location>
</feature>
<feature type="modified residue" description="Citrulline" evidence="1">
    <location>
        <position position="383"/>
    </location>
</feature>
<feature type="sequence conflict" description="In Ref. 1; BAA34246." evidence="7" ref="1">
    <original>G</original>
    <variation>S</variation>
    <location>
        <position position="41"/>
    </location>
</feature>
<feature type="sequence conflict" description="In Ref. 1; BAA34246." evidence="7" ref="1">
    <original>E</original>
    <variation>Q</variation>
    <location>
        <position position="90"/>
    </location>
</feature>
<feature type="sequence conflict" description="In Ref. 2; BAD16627." evidence="7" ref="2">
    <original>P</original>
    <variation>L</variation>
    <location>
        <position position="99"/>
    </location>
</feature>
<feature type="sequence conflict" description="In Ref. 1; BAA34246." evidence="7" ref="1">
    <original>Q</original>
    <variation>P</variation>
    <location>
        <position position="131"/>
    </location>
</feature>
<feature type="sequence conflict" description="In Ref. 1; BAA34246." evidence="7" ref="1">
    <original>R</original>
    <variation>K</variation>
    <location>
        <position position="210"/>
    </location>
</feature>
<feature type="sequence conflict" description="In Ref. 1; BAA34246." evidence="7" ref="1">
    <original>P</original>
    <variation>L</variation>
    <location>
        <position position="222"/>
    </location>
</feature>
<feature type="sequence conflict" description="In Ref. 1; BAA34246." evidence="7" ref="1">
    <original>A</original>
    <variation>V</variation>
    <location>
        <position position="481"/>
    </location>
</feature>
<feature type="sequence conflict" description="In Ref. 1; BAA34246." evidence="7" ref="1">
    <original>A</original>
    <variation>V</variation>
    <location>
        <position position="573"/>
    </location>
</feature>
<feature type="sequence conflict" description="In Ref. 1; BAA34246." evidence="7" ref="1">
    <original>H</original>
    <variation>R</variation>
    <location>
        <position position="612"/>
    </location>
</feature>
<feature type="sequence conflict" description="In Ref. 2; BAD16627." evidence="7" ref="2">
    <original>KP</original>
    <variation>T</variation>
    <location>
        <begin position="655"/>
        <end position="656"/>
    </location>
</feature>
<dbReference type="EC" id="3.5.3.15" evidence="2"/>
<dbReference type="EMBL" id="AB013850">
    <property type="protein sequence ID" value="BAA34246.1"/>
    <property type="molecule type" value="mRNA"/>
</dbReference>
<dbReference type="EMBL" id="AB121692">
    <property type="protein sequence ID" value="BAD16627.1"/>
    <property type="molecule type" value="Genomic_DNA"/>
</dbReference>
<dbReference type="EMBL" id="AL807805">
    <property type="status" value="NOT_ANNOTATED_CDS"/>
    <property type="molecule type" value="Genomic_DNA"/>
</dbReference>
<dbReference type="CCDS" id="CCDS18854.1"/>
<dbReference type="RefSeq" id="NP_035191.2">
    <property type="nucleotide sequence ID" value="NM_011061.2"/>
</dbReference>
<dbReference type="PDB" id="6MKD">
    <property type="method" value="X-ray"/>
    <property type="resolution" value="3.20 A"/>
    <property type="chains" value="D=93-105"/>
</dbReference>
<dbReference type="PDB" id="6MKR">
    <property type="method" value="X-ray"/>
    <property type="resolution" value="3.35 A"/>
    <property type="chains" value="D=93-105"/>
</dbReference>
<dbReference type="PDB" id="6MNG">
    <property type="method" value="X-ray"/>
    <property type="resolution" value="2.66 A"/>
    <property type="chains" value="D=93-105"/>
</dbReference>
<dbReference type="PDB" id="6MNM">
    <property type="method" value="X-ray"/>
    <property type="resolution" value="3.10 A"/>
    <property type="chains" value="D=93-105"/>
</dbReference>
<dbReference type="PDB" id="6MNN">
    <property type="method" value="X-ray"/>
    <property type="resolution" value="2.83 A"/>
    <property type="chains" value="D=93-105"/>
</dbReference>
<dbReference type="PDB" id="6MNO">
    <property type="method" value="X-ray"/>
    <property type="resolution" value="2.90 A"/>
    <property type="chains" value="D=93-105"/>
</dbReference>
<dbReference type="PDBsum" id="6MKD"/>
<dbReference type="PDBsum" id="6MKR"/>
<dbReference type="PDBsum" id="6MNG"/>
<dbReference type="PDBsum" id="6MNM"/>
<dbReference type="PDBsum" id="6MNN"/>
<dbReference type="PDBsum" id="6MNO"/>
<dbReference type="SMR" id="Q9Z183"/>
<dbReference type="BioGRID" id="202095">
    <property type="interactions" value="1"/>
</dbReference>
<dbReference type="FunCoup" id="Q9Z183">
    <property type="interactions" value="18"/>
</dbReference>
<dbReference type="STRING" id="10090.ENSMUSP00000026381"/>
<dbReference type="BindingDB" id="Q9Z183"/>
<dbReference type="ChEMBL" id="CHEMBL3407322"/>
<dbReference type="iPTMnet" id="Q9Z183"/>
<dbReference type="PhosphoSitePlus" id="Q9Z183"/>
<dbReference type="PaxDb" id="10090-ENSMUSP00000026381"/>
<dbReference type="PeptideAtlas" id="Q9Z183"/>
<dbReference type="ProteomicsDB" id="287936"/>
<dbReference type="ABCD" id="Q9Z183">
    <property type="antibodies" value="10 sequenced antibodies"/>
</dbReference>
<dbReference type="Antibodypedia" id="1465">
    <property type="antibodies" value="543 antibodies from 38 providers"/>
</dbReference>
<dbReference type="DNASU" id="18602"/>
<dbReference type="Ensembl" id="ENSMUST00000026381.7">
    <property type="protein sequence ID" value="ENSMUSP00000026381.7"/>
    <property type="gene ID" value="ENSMUSG00000025330.7"/>
</dbReference>
<dbReference type="GeneID" id="18602"/>
<dbReference type="KEGG" id="mmu:18602"/>
<dbReference type="UCSC" id="uc008vne.2">
    <property type="organism name" value="mouse"/>
</dbReference>
<dbReference type="AGR" id="MGI:1338898"/>
<dbReference type="CTD" id="23569"/>
<dbReference type="MGI" id="MGI:1338898">
    <property type="gene designation" value="Padi4"/>
</dbReference>
<dbReference type="VEuPathDB" id="HostDB:ENSMUSG00000025330"/>
<dbReference type="eggNOG" id="ENOG502QVJA">
    <property type="taxonomic scope" value="Eukaryota"/>
</dbReference>
<dbReference type="GeneTree" id="ENSGT00940000153217"/>
<dbReference type="HOGENOM" id="CLU_021911_0_0_1"/>
<dbReference type="InParanoid" id="Q9Z183"/>
<dbReference type="OMA" id="PQEVYAC"/>
<dbReference type="OrthoDB" id="5102063at2759"/>
<dbReference type="PhylomeDB" id="Q9Z183"/>
<dbReference type="TreeFam" id="TF331952"/>
<dbReference type="BRENDA" id="3.5.3.15">
    <property type="organism ID" value="3474"/>
</dbReference>
<dbReference type="Reactome" id="R-MMU-3247509">
    <property type="pathway name" value="Chromatin modifying enzymes"/>
</dbReference>
<dbReference type="BioGRID-ORCS" id="18602">
    <property type="hits" value="8 hits in 84 CRISPR screens"/>
</dbReference>
<dbReference type="PRO" id="PR:Q9Z183"/>
<dbReference type="Proteomes" id="UP000000589">
    <property type="component" value="Chromosome 4"/>
</dbReference>
<dbReference type="RNAct" id="Q9Z183">
    <property type="molecule type" value="protein"/>
</dbReference>
<dbReference type="Bgee" id="ENSMUSG00000025330">
    <property type="expression patterns" value="Expressed in granulocyte and 51 other cell types or tissues"/>
</dbReference>
<dbReference type="GO" id="GO:0005737">
    <property type="term" value="C:cytoplasm"/>
    <property type="evidence" value="ECO:0007669"/>
    <property type="project" value="UniProtKB-SubCell"/>
</dbReference>
<dbReference type="GO" id="GO:0005634">
    <property type="term" value="C:nucleus"/>
    <property type="evidence" value="ECO:0000250"/>
    <property type="project" value="UniProtKB"/>
</dbReference>
<dbReference type="GO" id="GO:0032991">
    <property type="term" value="C:protein-containing complex"/>
    <property type="evidence" value="ECO:0007669"/>
    <property type="project" value="Ensembl"/>
</dbReference>
<dbReference type="GO" id="GO:0005509">
    <property type="term" value="F:calcium ion binding"/>
    <property type="evidence" value="ECO:0000250"/>
    <property type="project" value="UniProtKB"/>
</dbReference>
<dbReference type="GO" id="GO:0140797">
    <property type="term" value="F:histone H3R17 arginine deiminase activity"/>
    <property type="evidence" value="ECO:0007669"/>
    <property type="project" value="Ensembl"/>
</dbReference>
<dbReference type="GO" id="GO:0140795">
    <property type="term" value="F:histone H3R2 arginine deiminase activity"/>
    <property type="evidence" value="ECO:0007669"/>
    <property type="project" value="Ensembl"/>
</dbReference>
<dbReference type="GO" id="GO:0140798">
    <property type="term" value="F:histone H3R26 arginine deiminase activity"/>
    <property type="evidence" value="ECO:0007669"/>
    <property type="project" value="Ensembl"/>
</dbReference>
<dbReference type="GO" id="GO:0140796">
    <property type="term" value="F:histone H3R8 arginine deiminase activity"/>
    <property type="evidence" value="ECO:0007669"/>
    <property type="project" value="Ensembl"/>
</dbReference>
<dbReference type="GO" id="GO:0042802">
    <property type="term" value="F:identical protein binding"/>
    <property type="evidence" value="ECO:0007669"/>
    <property type="project" value="Ensembl"/>
</dbReference>
<dbReference type="GO" id="GO:0004668">
    <property type="term" value="F:protein-arginine deiminase activity"/>
    <property type="evidence" value="ECO:0000314"/>
    <property type="project" value="UniProtKB"/>
</dbReference>
<dbReference type="GO" id="GO:0006325">
    <property type="term" value="P:chromatin organization"/>
    <property type="evidence" value="ECO:0000315"/>
    <property type="project" value="UniProtKB"/>
</dbReference>
<dbReference type="GO" id="GO:0006338">
    <property type="term" value="P:chromatin remodeling"/>
    <property type="evidence" value="ECO:0000315"/>
    <property type="project" value="UniProtKB"/>
</dbReference>
<dbReference type="GO" id="GO:0045087">
    <property type="term" value="P:innate immune response"/>
    <property type="evidence" value="ECO:0007669"/>
    <property type="project" value="UniProtKB-KW"/>
</dbReference>
<dbReference type="GO" id="GO:0006334">
    <property type="term" value="P:nucleosome assembly"/>
    <property type="evidence" value="ECO:0000315"/>
    <property type="project" value="UniProtKB"/>
</dbReference>
<dbReference type="GO" id="GO:0043687">
    <property type="term" value="P:post-translational protein modification"/>
    <property type="evidence" value="ECO:0007669"/>
    <property type="project" value="Ensembl"/>
</dbReference>
<dbReference type="GO" id="GO:0019827">
    <property type="term" value="P:stem cell population maintenance"/>
    <property type="evidence" value="ECO:0000315"/>
    <property type="project" value="UniProtKB"/>
</dbReference>
<dbReference type="CDD" id="cd04214">
    <property type="entry name" value="PAD_N"/>
    <property type="match status" value="1"/>
</dbReference>
<dbReference type="FunFam" id="2.60.40.1700:FF:000001">
    <property type="entry name" value="Protein-arginine deiminase type-2"/>
    <property type="match status" value="1"/>
</dbReference>
<dbReference type="FunFam" id="3.75.10.10:FF:000003">
    <property type="entry name" value="Protein-arginine deiminase type-2"/>
    <property type="match status" value="1"/>
</dbReference>
<dbReference type="FunFam" id="2.60.40.1860:FF:000003">
    <property type="entry name" value="Protein-arginine deiminase type-4"/>
    <property type="match status" value="1"/>
</dbReference>
<dbReference type="Gene3D" id="3.75.10.10">
    <property type="entry name" value="L-arginine/glycine Amidinotransferase, Chain A"/>
    <property type="match status" value="1"/>
</dbReference>
<dbReference type="Gene3D" id="2.60.40.1700">
    <property type="entry name" value="Protein-arginine deiminase, central domain"/>
    <property type="match status" value="1"/>
</dbReference>
<dbReference type="Gene3D" id="2.60.40.1860">
    <property type="entry name" value="Protein-arginine deiminase, N-terminal domain"/>
    <property type="match status" value="1"/>
</dbReference>
<dbReference type="InterPro" id="IPR008972">
    <property type="entry name" value="Cupredoxin"/>
</dbReference>
<dbReference type="InterPro" id="IPR004303">
    <property type="entry name" value="PAD"/>
</dbReference>
<dbReference type="InterPro" id="IPR013530">
    <property type="entry name" value="PAD_C"/>
</dbReference>
<dbReference type="InterPro" id="IPR036556">
    <property type="entry name" value="PAD_central_sf"/>
</dbReference>
<dbReference type="InterPro" id="IPR013732">
    <property type="entry name" value="PAD_N"/>
</dbReference>
<dbReference type="InterPro" id="IPR038685">
    <property type="entry name" value="PAD_N_sf"/>
</dbReference>
<dbReference type="InterPro" id="IPR013733">
    <property type="entry name" value="Prot_Arg_deaminase_cen_dom"/>
</dbReference>
<dbReference type="PANTHER" id="PTHR10837">
    <property type="entry name" value="PEPTIDYLARGININE DEIMINASE"/>
    <property type="match status" value="1"/>
</dbReference>
<dbReference type="PANTHER" id="PTHR10837:SF3">
    <property type="entry name" value="PROTEIN-ARGININE DEIMINASE TYPE-4"/>
    <property type="match status" value="1"/>
</dbReference>
<dbReference type="Pfam" id="PF03068">
    <property type="entry name" value="PAD"/>
    <property type="match status" value="1"/>
</dbReference>
<dbReference type="Pfam" id="PF08527">
    <property type="entry name" value="PAD_M"/>
    <property type="match status" value="1"/>
</dbReference>
<dbReference type="Pfam" id="PF08526">
    <property type="entry name" value="PAD_N"/>
    <property type="match status" value="1"/>
</dbReference>
<dbReference type="PIRSF" id="PIRSF001247">
    <property type="entry name" value="Protein-arginine_deiminase"/>
    <property type="match status" value="1"/>
</dbReference>
<dbReference type="SUPFAM" id="SSF49503">
    <property type="entry name" value="Cupredoxins"/>
    <property type="match status" value="1"/>
</dbReference>
<dbReference type="SUPFAM" id="SSF55909">
    <property type="entry name" value="Pentein"/>
    <property type="match status" value="1"/>
</dbReference>
<dbReference type="SUPFAM" id="SSF110083">
    <property type="entry name" value="Peptidylarginine deiminase Pad4, middle domain"/>
    <property type="match status" value="1"/>
</dbReference>
<accession>Q9Z183</accession>
<accession>A2AMU3</accession>
<accession>Q75WC7</accession>
<keyword id="KW-0002">3D-structure</keyword>
<keyword id="KW-0106">Calcium</keyword>
<keyword id="KW-0156">Chromatin regulator</keyword>
<keyword id="KW-0164">Citrullination</keyword>
<keyword id="KW-0963">Cytoplasm</keyword>
<keyword id="KW-0378">Hydrolase</keyword>
<keyword id="KW-0391">Immunity</keyword>
<keyword id="KW-0399">Innate immunity</keyword>
<keyword id="KW-0479">Metal-binding</keyword>
<keyword id="KW-0539">Nucleus</keyword>
<keyword id="KW-1185">Reference proteome</keyword>
<keyword id="KW-0804">Transcription</keyword>
<keyword id="KW-0805">Transcription regulation</keyword>
<name>PADI4_MOUSE</name>
<protein>
    <recommendedName>
        <fullName>Protein-arginine deiminase type-4</fullName>
        <ecNumber evidence="2">3.5.3.15</ecNumber>
    </recommendedName>
    <alternativeName>
        <fullName>Peptidylarginine deiminase IV</fullName>
    </alternativeName>
    <alternativeName>
        <fullName>Protein-arginine deiminase type IV</fullName>
    </alternativeName>
</protein>
<gene>
    <name type="primary">Padi4</name>
    <name type="synonym">Pad4</name>
    <name type="synonym">Pdi4</name>
</gene>